<dbReference type="EC" id="6.3.4.21" evidence="2"/>
<dbReference type="EMBL" id="AY214330">
    <property type="protein sequence ID" value="AAP69608.1"/>
    <property type="molecule type" value="mRNA"/>
</dbReference>
<dbReference type="RefSeq" id="NP_997492.1">
    <property type="nucleotide sequence ID" value="NM_207609.1"/>
</dbReference>
<dbReference type="SMR" id="Q6XQN1"/>
<dbReference type="FunCoup" id="Q6XQN1">
    <property type="interactions" value="720"/>
</dbReference>
<dbReference type="STRING" id="10116.ENSRNOP00000010637"/>
<dbReference type="iPTMnet" id="Q6XQN1"/>
<dbReference type="PhosphoSitePlus" id="Q6XQN1"/>
<dbReference type="PaxDb" id="10116-ENSRNOP00000010637"/>
<dbReference type="GeneID" id="315085"/>
<dbReference type="KEGG" id="rno:315085"/>
<dbReference type="UCSC" id="RGD:1302945">
    <property type="organism name" value="rat"/>
</dbReference>
<dbReference type="AGR" id="RGD:1302945"/>
<dbReference type="CTD" id="93100"/>
<dbReference type="RGD" id="1302945">
    <property type="gene designation" value="Naprt"/>
</dbReference>
<dbReference type="eggNOG" id="KOG2511">
    <property type="taxonomic scope" value="Eukaryota"/>
</dbReference>
<dbReference type="InParanoid" id="Q6XQN1"/>
<dbReference type="PhylomeDB" id="Q6XQN1"/>
<dbReference type="BRENDA" id="6.3.4.21">
    <property type="organism ID" value="5301"/>
</dbReference>
<dbReference type="Reactome" id="R-RNO-197264">
    <property type="pathway name" value="Nicotinamide salvaging"/>
</dbReference>
<dbReference type="Reactome" id="R-RNO-6798695">
    <property type="pathway name" value="Neutrophil degranulation"/>
</dbReference>
<dbReference type="UniPathway" id="UPA00253">
    <property type="reaction ID" value="UER00457"/>
</dbReference>
<dbReference type="PRO" id="PR:Q6XQN1"/>
<dbReference type="Proteomes" id="UP000002494">
    <property type="component" value="Unplaced"/>
</dbReference>
<dbReference type="GO" id="GO:0005829">
    <property type="term" value="C:cytosol"/>
    <property type="evidence" value="ECO:0000250"/>
    <property type="project" value="UniProtKB"/>
</dbReference>
<dbReference type="GO" id="GO:0046872">
    <property type="term" value="F:metal ion binding"/>
    <property type="evidence" value="ECO:0007669"/>
    <property type="project" value="UniProtKB-KW"/>
</dbReference>
<dbReference type="GO" id="GO:0004516">
    <property type="term" value="F:nicotinate phosphoribosyltransferase activity"/>
    <property type="evidence" value="ECO:0000314"/>
    <property type="project" value="RGD"/>
</dbReference>
<dbReference type="GO" id="GO:0016740">
    <property type="term" value="F:transferase activity"/>
    <property type="evidence" value="ECO:0007669"/>
    <property type="project" value="UniProtKB-KW"/>
</dbReference>
<dbReference type="GO" id="GO:0009435">
    <property type="term" value="P:NAD biosynthetic process"/>
    <property type="evidence" value="ECO:0000314"/>
    <property type="project" value="RGD"/>
</dbReference>
<dbReference type="GO" id="GO:0034355">
    <property type="term" value="P:NAD biosynthetic process via the salvage pathway"/>
    <property type="evidence" value="ECO:0000266"/>
    <property type="project" value="RGD"/>
</dbReference>
<dbReference type="GO" id="GO:0006979">
    <property type="term" value="P:response to oxidative stress"/>
    <property type="evidence" value="ECO:0000250"/>
    <property type="project" value="UniProtKB"/>
</dbReference>
<dbReference type="CDD" id="cd01570">
    <property type="entry name" value="NAPRTase_A"/>
    <property type="match status" value="1"/>
</dbReference>
<dbReference type="FunFam" id="3.20.140.10:FF:000005">
    <property type="entry name" value="Nicotinate phosphoribosyltransferase"/>
    <property type="match status" value="1"/>
</dbReference>
<dbReference type="FunFam" id="3.20.140.10:FF:000007">
    <property type="entry name" value="Nicotinate phosphoribosyltransferase"/>
    <property type="match status" value="1"/>
</dbReference>
<dbReference type="FunFam" id="3.20.20.70:FF:000126">
    <property type="entry name" value="Nicotinate phosphoribosyltransferase"/>
    <property type="match status" value="1"/>
</dbReference>
<dbReference type="FunFam" id="3.20.20.70:FF:000155">
    <property type="entry name" value="Nicotinate phosphoribosyltransferase"/>
    <property type="match status" value="1"/>
</dbReference>
<dbReference type="Gene3D" id="3.20.20.70">
    <property type="entry name" value="Aldolase class I"/>
    <property type="match status" value="2"/>
</dbReference>
<dbReference type="Gene3D" id="3.20.140.10">
    <property type="entry name" value="nicotinate phosphoribosyltransferase"/>
    <property type="match status" value="2"/>
</dbReference>
<dbReference type="InterPro" id="IPR013785">
    <property type="entry name" value="Aldolase_TIM"/>
</dbReference>
<dbReference type="InterPro" id="IPR041619">
    <property type="entry name" value="NAPRTase_C"/>
</dbReference>
<dbReference type="InterPro" id="IPR040727">
    <property type="entry name" value="NAPRTase_N"/>
</dbReference>
<dbReference type="InterPro" id="IPR007229">
    <property type="entry name" value="Nic_PRibTrfase-Fam"/>
</dbReference>
<dbReference type="InterPro" id="IPR006405">
    <property type="entry name" value="Nic_PRibTrfase_pncB"/>
</dbReference>
<dbReference type="InterPro" id="IPR036068">
    <property type="entry name" value="Nicotinate_pribotase-like_C"/>
</dbReference>
<dbReference type="NCBIfam" id="TIGR01513">
    <property type="entry name" value="NAPRTase_put"/>
    <property type="match status" value="1"/>
</dbReference>
<dbReference type="PANTHER" id="PTHR11098">
    <property type="entry name" value="NICOTINATE PHOSPHORIBOSYLTRANSFERASE"/>
    <property type="match status" value="1"/>
</dbReference>
<dbReference type="PANTHER" id="PTHR11098:SF1">
    <property type="entry name" value="NICOTINATE PHOSPHORIBOSYLTRANSFERASE"/>
    <property type="match status" value="1"/>
</dbReference>
<dbReference type="Pfam" id="PF17956">
    <property type="entry name" value="NAPRTase_C"/>
    <property type="match status" value="1"/>
</dbReference>
<dbReference type="Pfam" id="PF17767">
    <property type="entry name" value="NAPRTase_N"/>
    <property type="match status" value="1"/>
</dbReference>
<dbReference type="PIRSF" id="PIRSF000484">
    <property type="entry name" value="NAPRT"/>
    <property type="match status" value="1"/>
</dbReference>
<dbReference type="SUPFAM" id="SSF51690">
    <property type="entry name" value="Nicotinate/Quinolinate PRTase C-terminal domain-like"/>
    <property type="match status" value="1"/>
</dbReference>
<dbReference type="SUPFAM" id="SSF54675">
    <property type="entry name" value="Nicotinate/Quinolinate PRTase N-terminal domain-like"/>
    <property type="match status" value="1"/>
</dbReference>
<evidence type="ECO:0000250" key="1">
    <source>
        <dbReference type="UniProtKB" id="P22253"/>
    </source>
</evidence>
<evidence type="ECO:0000250" key="2">
    <source>
        <dbReference type="UniProtKB" id="Q6XQN6"/>
    </source>
</evidence>
<evidence type="ECO:0000250" key="3">
    <source>
        <dbReference type="UniProtKB" id="Q9HJ28"/>
    </source>
</evidence>
<evidence type="ECO:0000305" key="4"/>
<feature type="chain" id="PRO_0000315683" description="Nicotinate phosphoribosyltransferase">
    <location>
        <begin position="1"/>
        <end position="538"/>
    </location>
</feature>
<feature type="binding site" evidence="3">
    <location>
        <position position="21"/>
    </location>
    <ligand>
        <name>nicotinate</name>
        <dbReference type="ChEBI" id="CHEBI:32544"/>
    </ligand>
</feature>
<feature type="binding site" evidence="3">
    <location>
        <position position="210"/>
    </location>
    <ligand>
        <name>nicotinate</name>
        <dbReference type="ChEBI" id="CHEBI:32544"/>
    </ligand>
</feature>
<feature type="binding site" evidence="3">
    <location>
        <position position="318"/>
    </location>
    <ligand>
        <name>nicotinate</name>
        <dbReference type="ChEBI" id="CHEBI:32544"/>
    </ligand>
</feature>
<feature type="binding site" evidence="3">
    <location>
        <position position="380"/>
    </location>
    <ligand>
        <name>5-phospho-alpha-D-ribose 1-diphosphate</name>
        <dbReference type="ChEBI" id="CHEBI:58017"/>
    </ligand>
</feature>
<feature type="modified residue" description="Phosphohistidine" evidence="1">
    <location>
        <position position="213"/>
    </location>
</feature>
<comment type="function">
    <text evidence="2">Catalyzes the first step in the biosynthesis of NAD from nicotinic acid, the ATP-dependent synthesis of beta-nicotinate D-ribonucleotide from nicotinate and 5-phospho-D-ribose 1-phosphate. Helps prevent cellular oxidative stress via its role in NAD biosynthesis.</text>
</comment>
<comment type="catalytic activity">
    <reaction evidence="2">
        <text>nicotinate + 5-phospho-alpha-D-ribose 1-diphosphate + ATP + H2O = nicotinate beta-D-ribonucleotide + ADP + phosphate + diphosphate</text>
        <dbReference type="Rhea" id="RHEA:36163"/>
        <dbReference type="ChEBI" id="CHEBI:15377"/>
        <dbReference type="ChEBI" id="CHEBI:30616"/>
        <dbReference type="ChEBI" id="CHEBI:32544"/>
        <dbReference type="ChEBI" id="CHEBI:33019"/>
        <dbReference type="ChEBI" id="CHEBI:43474"/>
        <dbReference type="ChEBI" id="CHEBI:57502"/>
        <dbReference type="ChEBI" id="CHEBI:58017"/>
        <dbReference type="ChEBI" id="CHEBI:456216"/>
        <dbReference type="EC" id="6.3.4.21"/>
    </reaction>
</comment>
<comment type="cofactor">
    <cofactor evidence="2">
        <name>Mg(2+)</name>
        <dbReference type="ChEBI" id="CHEBI:18420"/>
    </cofactor>
    <cofactor evidence="2">
        <name>Mn(2+)</name>
        <dbReference type="ChEBI" id="CHEBI:29035"/>
    </cofactor>
    <text evidence="2">Activity is highest with Mn(2+).</text>
</comment>
<comment type="pathway">
    <text evidence="2">Cofactor biosynthesis; NAD(+) biosynthesis; nicotinate D-ribonucleotide from nicotinate: step 1/1.</text>
</comment>
<comment type="subunit">
    <text evidence="2">Homodimer.</text>
</comment>
<comment type="subcellular location">
    <subcellularLocation>
        <location evidence="2">Cytoplasm</location>
        <location evidence="2">Cytosol</location>
    </subcellularLocation>
</comment>
<comment type="PTM">
    <text evidence="1">Transiently phosphorylated on a His residue during the reaction cycle. Phosphorylation strongly increases the affinity for substrates and increases the rate of nicotinate D-ribonucleotide production. Dephosphorylation regenerates the low-affinity form of the enzyme, leading to product release.</text>
</comment>
<comment type="similarity">
    <text evidence="4">Belongs to the NAPRTase family.</text>
</comment>
<keyword id="KW-0963">Cytoplasm</keyword>
<keyword id="KW-0436">Ligase</keyword>
<keyword id="KW-0460">Magnesium</keyword>
<keyword id="KW-0464">Manganese</keyword>
<keyword id="KW-0479">Metal-binding</keyword>
<keyword id="KW-0597">Phosphoprotein</keyword>
<keyword id="KW-0662">Pyridine nucleotide biosynthesis</keyword>
<keyword id="KW-1185">Reference proteome</keyword>
<keyword id="KW-0808">Transferase</keyword>
<sequence>MEMELDDQGRMVVRPLLTDLYQATMGLGYWRAGRACEEAEFELFFRHCPFGGSFALTAGLQDCIRFLRAFRLRDADVQFLASVLPPDTDPAFFEHLRALDCSRVSVRALPEGSLAFPGVPLLQVSGPLLLVQLLETPLLCLVSYASLVATNAARLRLIAGPDKRLLEMGLRRAQGPDGGFTASIYSYLGGFDSSSNTLAGQLRGVPVAGTLAHSFITSFLGSEVPPDPMLAPASSEGPAVDLPASVNLWLKHVCIYLGLEEREPHLGERAAFVAYALAFPRAFQGLLDSYSVRRSGLPNFLAVALALGELGYRAVGVRLDSGDLLQQAKEIRGIFRTVGAEFQMPWLEFVPIAVSNNIDEKELARLAQKGSEVNVIGIGTNVVTCPKQPSMGCVYKLVSVGGQPRIKLTEESQKETLPGSKAAFRFLVSEGSLLLDLLQLAEEPPPKAGQELRVWLQGAQEPCTVKPAQVEPLLRLYLQQGQPYEPLPSLEESRAFAQQSLSRLRPAHKQLQNPAVYQVALSEKLRALVDSLSARGAL</sequence>
<gene>
    <name type="primary">Naprt</name>
    <name type="synonym">Naprt1</name>
</gene>
<name>PNCB_RAT</name>
<accession>Q6XQN1</accession>
<protein>
    <recommendedName>
        <fullName>Nicotinate phosphoribosyltransferase</fullName>
        <shortName>NAPRTase</shortName>
        <ecNumber evidence="2">6.3.4.21</ecNumber>
    </recommendedName>
    <alternativeName>
        <fullName>Nicotinate phosphoribosyltransferase domain-containing protein 1</fullName>
    </alternativeName>
</protein>
<proteinExistence type="evidence at transcript level"/>
<reference key="1">
    <citation type="submission" date="2003-01" db="EMBL/GenBank/DDBJ databases">
        <title>Sequence analysis and molecular evolution of the eukaryotic nicotinate phosphoribosyltransferase family.</title>
        <authorList>
            <person name="Huang C.-H."/>
            <person name="Peng J."/>
            <person name="Chen Y."/>
        </authorList>
    </citation>
    <scope>NUCLEOTIDE SEQUENCE [MRNA]</scope>
</reference>
<organism>
    <name type="scientific">Rattus norvegicus</name>
    <name type="common">Rat</name>
    <dbReference type="NCBI Taxonomy" id="10116"/>
    <lineage>
        <taxon>Eukaryota</taxon>
        <taxon>Metazoa</taxon>
        <taxon>Chordata</taxon>
        <taxon>Craniata</taxon>
        <taxon>Vertebrata</taxon>
        <taxon>Euteleostomi</taxon>
        <taxon>Mammalia</taxon>
        <taxon>Eutheria</taxon>
        <taxon>Euarchontoglires</taxon>
        <taxon>Glires</taxon>
        <taxon>Rodentia</taxon>
        <taxon>Myomorpha</taxon>
        <taxon>Muroidea</taxon>
        <taxon>Muridae</taxon>
        <taxon>Murinae</taxon>
        <taxon>Rattus</taxon>
    </lineage>
</organism>